<proteinExistence type="evidence at protein level"/>
<keyword id="KW-0002">3D-structure</keyword>
<keyword id="KW-0025">Alternative splicing</keyword>
<keyword id="KW-0067">ATP-binding</keyword>
<keyword id="KW-1186">Ciliopathy</keyword>
<keyword id="KW-0963">Cytoplasm</keyword>
<keyword id="KW-0225">Disease variant</keyword>
<keyword id="KW-0347">Helicase</keyword>
<keyword id="KW-0378">Hydrolase</keyword>
<keyword id="KW-1017">Isopeptide bond</keyword>
<keyword id="KW-0479">Metal-binding</keyword>
<keyword id="KW-0547">Nucleotide-binding</keyword>
<keyword id="KW-0539">Nucleus</keyword>
<keyword id="KW-0597">Phosphoprotein</keyword>
<keyword id="KW-1267">Proteomics identification</keyword>
<keyword id="KW-1185">Reference proteome</keyword>
<keyword id="KW-0694">RNA-binding</keyword>
<keyword id="KW-0832">Ubl conjugation</keyword>
<keyword id="KW-0862">Zinc</keyword>
<keyword id="KW-0863">Zinc-finger</keyword>
<organism>
    <name type="scientific">Homo sapiens</name>
    <name type="common">Human</name>
    <dbReference type="NCBI Taxonomy" id="9606"/>
    <lineage>
        <taxon>Eukaryota</taxon>
        <taxon>Metazoa</taxon>
        <taxon>Chordata</taxon>
        <taxon>Craniata</taxon>
        <taxon>Vertebrata</taxon>
        <taxon>Euteleostomi</taxon>
        <taxon>Mammalia</taxon>
        <taxon>Eutheria</taxon>
        <taxon>Euarchontoglires</taxon>
        <taxon>Primates</taxon>
        <taxon>Haplorrhini</taxon>
        <taxon>Catarrhini</taxon>
        <taxon>Hominidae</taxon>
        <taxon>Homo</taxon>
    </lineage>
</organism>
<feature type="chain" id="PRO_0000282713" description="Probable ATP-dependent RNA helicase DDX59">
    <location>
        <begin position="1"/>
        <end position="619"/>
    </location>
</feature>
<feature type="domain" description="Helicase ATP-binding" evidence="1">
    <location>
        <begin position="234"/>
        <end position="405"/>
    </location>
</feature>
<feature type="domain" description="Helicase C-terminal" evidence="2">
    <location>
        <begin position="416"/>
        <end position="579"/>
    </location>
</feature>
<feature type="zinc finger region" description="HIT-type">
    <location>
        <begin position="104"/>
        <end position="133"/>
    </location>
</feature>
<feature type="region of interest" description="Disordered" evidence="3">
    <location>
        <begin position="57"/>
        <end position="98"/>
    </location>
</feature>
<feature type="region of interest" description="Disordered" evidence="3">
    <location>
        <begin position="142"/>
        <end position="161"/>
    </location>
</feature>
<feature type="short sequence motif" description="Q motif">
    <location>
        <begin position="203"/>
        <end position="231"/>
    </location>
</feature>
<feature type="short sequence motif" description="DEAD box">
    <location>
        <begin position="353"/>
        <end position="356"/>
    </location>
</feature>
<feature type="compositionally biased region" description="Basic and acidic residues" evidence="3">
    <location>
        <begin position="80"/>
        <end position="91"/>
    </location>
</feature>
<feature type="binding site" evidence="1">
    <location>
        <begin position="247"/>
        <end position="254"/>
    </location>
    <ligand>
        <name>ATP</name>
        <dbReference type="ChEBI" id="CHEBI:30616"/>
    </ligand>
</feature>
<feature type="modified residue" description="Phosphoserine" evidence="11">
    <location>
        <position position="64"/>
    </location>
</feature>
<feature type="modified residue" description="Phosphoserine" evidence="13">
    <location>
        <position position="76"/>
    </location>
</feature>
<feature type="modified residue" description="Phosphoserine" evidence="13">
    <location>
        <position position="156"/>
    </location>
</feature>
<feature type="modified residue" description="Phosphoserine" evidence="12 13">
    <location>
        <position position="160"/>
    </location>
</feature>
<feature type="cross-link" description="Glycyl lysine isopeptide (Lys-Gly) (interchain with G-Cter in SUMO2)" evidence="14">
    <location>
        <position position="26"/>
    </location>
</feature>
<feature type="splice variant" id="VSP_024227" description="In isoform 2." evidence="8">
    <original>IGRVGRLGQNGTAITFINNNSKRLFWDIAKRVKPTGSILPPQLLNSPYLHDQKRKEQQKDKQTQNDLVTGANLMDIIRKHDKSNSQK</original>
    <variation>ENTYKSTWRNPQHFQQDVRMTLGYVGKAQWEEDNQLKVKLGLKKNCSS</variation>
    <location>
        <begin position="533"/>
        <end position="619"/>
    </location>
</feature>
<feature type="sequence variant" id="VAR_035842" description="In a breast cancer sample; somatic mutation." evidence="5">
    <original>P</original>
    <variation>T</variation>
    <location>
        <position position="77"/>
    </location>
</feature>
<feature type="sequence variant" id="VAR_031424" description="In dbSNP:rs3795634.">
    <original>I</original>
    <variation>V</variation>
    <location>
        <position position="107"/>
    </location>
</feature>
<feature type="sequence variant" id="VAR_070198" description="In OFD5; markedly reduced expression in fibroblasts compared to wild-type protein; impaired SHH signaling in SAG-treated fibroblasts; dbSNP:rs587777067." evidence="6">
    <original>V</original>
    <variation>G</variation>
    <location>
        <position position="367"/>
    </location>
</feature>
<feature type="sequence variant" id="VAR_033001" description="In dbSNP:rs17854157." evidence="4">
    <original>S</original>
    <variation>R</variation>
    <location>
        <position position="472"/>
    </location>
</feature>
<feature type="sequence variant" id="VAR_070199" description="In OFD5; dbSNP:rs886037652." evidence="6">
    <original>G</original>
    <variation>R</variation>
    <location>
        <position position="534"/>
    </location>
</feature>
<feature type="strand" evidence="15">
    <location>
        <begin position="109"/>
        <end position="113"/>
    </location>
</feature>
<feature type="strand" evidence="15">
    <location>
        <begin position="116"/>
        <end position="118"/>
    </location>
</feature>
<feature type="strand" evidence="15">
    <location>
        <begin position="120"/>
        <end position="122"/>
    </location>
</feature>
<feature type="strand" evidence="15">
    <location>
        <begin position="125"/>
        <end position="128"/>
    </location>
</feature>
<feature type="helix" evidence="15">
    <location>
        <begin position="129"/>
        <end position="143"/>
    </location>
</feature>
<accession>Q5T1V6</accession>
<accession>Q6PJL2</accession>
<accession>Q8IVW3</accession>
<accession>Q9H0W3</accession>
<protein>
    <recommendedName>
        <fullName>Probable ATP-dependent RNA helicase DDX59</fullName>
        <ecNumber>3.6.4.13</ecNumber>
    </recommendedName>
    <alternativeName>
        <fullName>DEAD box protein 59</fullName>
    </alternativeName>
    <alternativeName>
        <fullName evidence="9">Zinc finger HIT domain-containing protein 5</fullName>
    </alternativeName>
</protein>
<name>DDX59_HUMAN</name>
<sequence length="619" mass="68810">MFVPRSLKIKRNANDDGKSCVAKIIKPDPEDLQLDKSRDVPVDAVATEAATIDRHISESCPFPSPGGQLAEVHSVSPEQGAKDSHPSEEPVKSFSKTQRWAEPGEPICVVCGRYGEYICDKTDEDVCSLECKAKHLLQVKEKEEKSKLSNPQKADSEPESPLNASYVYKEHPFILNLQEDQIENLKQQLGILVQGQEVTRPIIDFEHCSLPEVLNHNLKKSGYEVPTPIQMQMIPVGLLGRDILASADTGSGKTAAFLLPVIMRALFESKTPSALILTPTRELAIQIERQAKELMSGLPRMKTVLLVGGLPLPPQLYRLQQHVKVIIATPGRLLDIIKQSSVELCGVKIVVVDEADTMLKMGFQQQVLDILENIPNDCQTILVSATIPTSIEQLASQLLHNPVRIITGEKNLPCANVRQIILWVEDPAKKKKLFEILNDKKLFKPPVLVFVDCKLGADLLSEAVQKITGLKSISIHSEKSQIERKNILKGLLEGDYEVVVSTGVLGRGLDLISVRLVVNFDMPSSMDEYVHQIGRVGRLGQNGTAITFINNNSKRLFWDIAKRVKPTGSILPPQLLNSPYLHDQKRKEQQKDKQTQNDLVTGANLMDIIRKHDKSNSQK</sequence>
<dbReference type="EC" id="3.6.4.13"/>
<dbReference type="EMBL" id="AL136611">
    <property type="protein sequence ID" value="CAB66546.1"/>
    <property type="molecule type" value="mRNA"/>
</dbReference>
<dbReference type="EMBL" id="AL445483">
    <property type="status" value="NOT_ANNOTATED_CDS"/>
    <property type="molecule type" value="Genomic_DNA"/>
</dbReference>
<dbReference type="EMBL" id="BC014183">
    <property type="protein sequence ID" value="AAH14183.1"/>
    <property type="status" value="ALT_SEQ"/>
    <property type="molecule type" value="mRNA"/>
</dbReference>
<dbReference type="EMBL" id="BC041801">
    <property type="protein sequence ID" value="AAH41801.1"/>
    <property type="molecule type" value="mRNA"/>
</dbReference>
<dbReference type="CCDS" id="CCDS30964.1">
    <molecule id="Q5T1V6-1"/>
</dbReference>
<dbReference type="RefSeq" id="NP_001026895.2">
    <molecule id="Q5T1V6-1"/>
    <property type="nucleotide sequence ID" value="NM_001031725.6"/>
</dbReference>
<dbReference type="RefSeq" id="NP_001307110.1">
    <property type="nucleotide sequence ID" value="NM_001320181.1"/>
</dbReference>
<dbReference type="RefSeq" id="NP_001307111.1">
    <property type="nucleotide sequence ID" value="NM_001320182.1"/>
</dbReference>
<dbReference type="RefSeq" id="NP_001336728.1">
    <molecule id="Q5T1V6-1"/>
    <property type="nucleotide sequence ID" value="NM_001349799.3"/>
</dbReference>
<dbReference type="RefSeq" id="NP_001336729.1">
    <molecule id="Q5T1V6-1"/>
    <property type="nucleotide sequence ID" value="NM_001349800.3"/>
</dbReference>
<dbReference type="RefSeq" id="XP_011508337.1">
    <property type="nucleotide sequence ID" value="XM_011510035.2"/>
</dbReference>
<dbReference type="RefSeq" id="XP_016857920.1">
    <property type="nucleotide sequence ID" value="XM_017002431.1"/>
</dbReference>
<dbReference type="RefSeq" id="XP_016857921.1">
    <molecule id="Q5T1V6-1"/>
    <property type="nucleotide sequence ID" value="XM_017002432.3"/>
</dbReference>
<dbReference type="RefSeq" id="XP_054194941.1">
    <molecule id="Q5T1V6-1"/>
    <property type="nucleotide sequence ID" value="XM_054338966.1"/>
</dbReference>
<dbReference type="RefSeq" id="XP_054194942.1">
    <molecule id="Q5T1V6-1"/>
    <property type="nucleotide sequence ID" value="XM_054338967.1"/>
</dbReference>
<dbReference type="PDB" id="2YQP">
    <property type="method" value="NMR"/>
    <property type="chains" value="A=94-146"/>
</dbReference>
<dbReference type="PDBsum" id="2YQP"/>
<dbReference type="SMR" id="Q5T1V6"/>
<dbReference type="BioGRID" id="123664">
    <property type="interactions" value="29"/>
</dbReference>
<dbReference type="FunCoup" id="Q5T1V6">
    <property type="interactions" value="1470"/>
</dbReference>
<dbReference type="IntAct" id="Q5T1V6">
    <property type="interactions" value="6"/>
</dbReference>
<dbReference type="MINT" id="Q5T1V6"/>
<dbReference type="STRING" id="9606.ENSP00000330460"/>
<dbReference type="BindingDB" id="Q5T1V6"/>
<dbReference type="ChEMBL" id="CHEMBL5465317"/>
<dbReference type="GlyGen" id="Q5T1V6">
    <property type="glycosylation" value="1 site, 1 O-linked glycan (1 site)"/>
</dbReference>
<dbReference type="iPTMnet" id="Q5T1V6"/>
<dbReference type="PhosphoSitePlus" id="Q5T1V6"/>
<dbReference type="BioMuta" id="DDX59"/>
<dbReference type="DMDM" id="74762230"/>
<dbReference type="jPOST" id="Q5T1V6"/>
<dbReference type="MassIVE" id="Q5T1V6"/>
<dbReference type="PaxDb" id="9606-ENSP00000330460"/>
<dbReference type="PeptideAtlas" id="Q5T1V6"/>
<dbReference type="ProteomicsDB" id="64290">
    <molecule id="Q5T1V6-1"/>
</dbReference>
<dbReference type="ProteomicsDB" id="64291">
    <molecule id="Q5T1V6-2"/>
</dbReference>
<dbReference type="Pumba" id="Q5T1V6"/>
<dbReference type="Antibodypedia" id="34489">
    <property type="antibodies" value="264 antibodies from 22 providers"/>
</dbReference>
<dbReference type="DNASU" id="83479"/>
<dbReference type="Ensembl" id="ENST00000331314.11">
    <molecule id="Q5T1V6-1"/>
    <property type="protein sequence ID" value="ENSP00000330460.6"/>
    <property type="gene ID" value="ENSG00000118197.14"/>
</dbReference>
<dbReference type="Ensembl" id="ENST00000447706.6">
    <molecule id="Q5T1V6-2"/>
    <property type="protein sequence ID" value="ENSP00000394367.2"/>
    <property type="gene ID" value="ENSG00000118197.14"/>
</dbReference>
<dbReference type="GeneID" id="83479"/>
<dbReference type="KEGG" id="hsa:83479"/>
<dbReference type="MANE-Select" id="ENST00000331314.11">
    <property type="protein sequence ID" value="ENSP00000330460.6"/>
    <property type="RefSeq nucleotide sequence ID" value="NM_001031725.6"/>
    <property type="RefSeq protein sequence ID" value="NP_001026895.2"/>
</dbReference>
<dbReference type="UCSC" id="uc009wzk.4">
    <molecule id="Q5T1V6-1"/>
    <property type="organism name" value="human"/>
</dbReference>
<dbReference type="AGR" id="HGNC:25360"/>
<dbReference type="CTD" id="83479"/>
<dbReference type="DisGeNET" id="83479"/>
<dbReference type="GeneCards" id="DDX59"/>
<dbReference type="HGNC" id="HGNC:25360">
    <property type="gene designation" value="DDX59"/>
</dbReference>
<dbReference type="HPA" id="ENSG00000118197">
    <property type="expression patterns" value="Low tissue specificity"/>
</dbReference>
<dbReference type="MalaCards" id="DDX59"/>
<dbReference type="MIM" id="174300">
    <property type="type" value="phenotype"/>
</dbReference>
<dbReference type="MIM" id="615464">
    <property type="type" value="gene"/>
</dbReference>
<dbReference type="neXtProt" id="NX_Q5T1V6"/>
<dbReference type="OpenTargets" id="ENSG00000118197"/>
<dbReference type="Orphanet" id="2919">
    <property type="disease" value="Orofaciodigital syndrome type 5"/>
</dbReference>
<dbReference type="PharmGKB" id="PA142672000"/>
<dbReference type="VEuPathDB" id="HostDB:ENSG00000118197"/>
<dbReference type="eggNOG" id="KOG0331">
    <property type="taxonomic scope" value="Eukaryota"/>
</dbReference>
<dbReference type="GeneTree" id="ENSGT00940000158639"/>
<dbReference type="HOGENOM" id="CLU_003041_1_5_1"/>
<dbReference type="InParanoid" id="Q5T1V6"/>
<dbReference type="OMA" id="DESFCIR"/>
<dbReference type="OrthoDB" id="360161at2759"/>
<dbReference type="PAN-GO" id="Q5T1V6">
    <property type="GO annotations" value="2 GO annotations based on evolutionary models"/>
</dbReference>
<dbReference type="PhylomeDB" id="Q5T1V6"/>
<dbReference type="TreeFam" id="TF330866"/>
<dbReference type="PathwayCommons" id="Q5T1V6"/>
<dbReference type="SignaLink" id="Q5T1V6"/>
<dbReference type="BioGRID-ORCS" id="83479">
    <property type="hits" value="665 hits in 1157 CRISPR screens"/>
</dbReference>
<dbReference type="ChiTaRS" id="DDX59">
    <property type="organism name" value="human"/>
</dbReference>
<dbReference type="EvolutionaryTrace" id="Q5T1V6"/>
<dbReference type="GeneWiki" id="DDX59"/>
<dbReference type="GenomeRNAi" id="83479"/>
<dbReference type="Pharos" id="Q5T1V6">
    <property type="development level" value="Tbio"/>
</dbReference>
<dbReference type="PRO" id="PR:Q5T1V6"/>
<dbReference type="Proteomes" id="UP000005640">
    <property type="component" value="Chromosome 1"/>
</dbReference>
<dbReference type="RNAct" id="Q5T1V6">
    <property type="molecule type" value="protein"/>
</dbReference>
<dbReference type="Bgee" id="ENSG00000118197">
    <property type="expression patterns" value="Expressed in buccal mucosa cell and 196 other cell types or tissues"/>
</dbReference>
<dbReference type="ExpressionAtlas" id="Q5T1V6">
    <property type="expression patterns" value="baseline and differential"/>
</dbReference>
<dbReference type="GO" id="GO:0005737">
    <property type="term" value="C:cytoplasm"/>
    <property type="evidence" value="ECO:0007669"/>
    <property type="project" value="UniProtKB-SubCell"/>
</dbReference>
<dbReference type="GO" id="GO:0005634">
    <property type="term" value="C:nucleus"/>
    <property type="evidence" value="ECO:0007669"/>
    <property type="project" value="UniProtKB-SubCell"/>
</dbReference>
<dbReference type="GO" id="GO:0005524">
    <property type="term" value="F:ATP binding"/>
    <property type="evidence" value="ECO:0007669"/>
    <property type="project" value="UniProtKB-KW"/>
</dbReference>
<dbReference type="GO" id="GO:0016887">
    <property type="term" value="F:ATP hydrolysis activity"/>
    <property type="evidence" value="ECO:0007669"/>
    <property type="project" value="RHEA"/>
</dbReference>
<dbReference type="GO" id="GO:0003729">
    <property type="term" value="F:mRNA binding"/>
    <property type="evidence" value="ECO:0000318"/>
    <property type="project" value="GO_Central"/>
</dbReference>
<dbReference type="GO" id="GO:0003724">
    <property type="term" value="F:RNA helicase activity"/>
    <property type="evidence" value="ECO:0000318"/>
    <property type="project" value="GO_Central"/>
</dbReference>
<dbReference type="GO" id="GO:0008270">
    <property type="term" value="F:zinc ion binding"/>
    <property type="evidence" value="ECO:0007669"/>
    <property type="project" value="UniProtKB-KW"/>
</dbReference>
<dbReference type="CDD" id="cd17962">
    <property type="entry name" value="DEADc_DDX59"/>
    <property type="match status" value="1"/>
</dbReference>
<dbReference type="CDD" id="cd18787">
    <property type="entry name" value="SF2_C_DEAD"/>
    <property type="match status" value="1"/>
</dbReference>
<dbReference type="CDD" id="cd23022">
    <property type="entry name" value="zf-HIT_DDX59"/>
    <property type="match status" value="1"/>
</dbReference>
<dbReference type="FunFam" id="3.40.50.300:FF:000079">
    <property type="entry name" value="probable ATP-dependent RNA helicase DDX17"/>
    <property type="match status" value="1"/>
</dbReference>
<dbReference type="FunFam" id="3.30.60.220:FF:000001">
    <property type="entry name" value="Probable ATP-dependent RNA helicase DDX59"/>
    <property type="match status" value="1"/>
</dbReference>
<dbReference type="FunFam" id="3.40.50.300:FF:001034">
    <property type="entry name" value="probable ATP-dependent RNA helicase DDX59"/>
    <property type="match status" value="1"/>
</dbReference>
<dbReference type="Gene3D" id="3.30.60.220">
    <property type="match status" value="1"/>
</dbReference>
<dbReference type="Gene3D" id="3.40.50.300">
    <property type="entry name" value="P-loop containing nucleotide triphosphate hydrolases"/>
    <property type="match status" value="2"/>
</dbReference>
<dbReference type="InterPro" id="IPR011545">
    <property type="entry name" value="DEAD/DEAH_box_helicase_dom"/>
</dbReference>
<dbReference type="InterPro" id="IPR050079">
    <property type="entry name" value="DEAD_box_RNA_helicase"/>
</dbReference>
<dbReference type="InterPro" id="IPR014001">
    <property type="entry name" value="Helicase_ATP-bd"/>
</dbReference>
<dbReference type="InterPro" id="IPR001650">
    <property type="entry name" value="Helicase_C-like"/>
</dbReference>
<dbReference type="InterPro" id="IPR027417">
    <property type="entry name" value="P-loop_NTPase"/>
</dbReference>
<dbReference type="InterPro" id="IPR014014">
    <property type="entry name" value="RNA_helicase_DEAD_Q_motif"/>
</dbReference>
<dbReference type="InterPro" id="IPR007529">
    <property type="entry name" value="Znf_HIT"/>
</dbReference>
<dbReference type="PANTHER" id="PTHR47959:SF1">
    <property type="entry name" value="ATP-DEPENDENT RNA HELICASE DBPA"/>
    <property type="match status" value="1"/>
</dbReference>
<dbReference type="PANTHER" id="PTHR47959">
    <property type="entry name" value="ATP-DEPENDENT RNA HELICASE RHLE-RELATED"/>
    <property type="match status" value="1"/>
</dbReference>
<dbReference type="Pfam" id="PF00270">
    <property type="entry name" value="DEAD"/>
    <property type="match status" value="1"/>
</dbReference>
<dbReference type="Pfam" id="PF00271">
    <property type="entry name" value="Helicase_C"/>
    <property type="match status" value="1"/>
</dbReference>
<dbReference type="Pfam" id="PF04438">
    <property type="entry name" value="zf-HIT"/>
    <property type="match status" value="1"/>
</dbReference>
<dbReference type="SMART" id="SM00487">
    <property type="entry name" value="DEXDc"/>
    <property type="match status" value="1"/>
</dbReference>
<dbReference type="SMART" id="SM00490">
    <property type="entry name" value="HELICc"/>
    <property type="match status" value="1"/>
</dbReference>
<dbReference type="SUPFAM" id="SSF52540">
    <property type="entry name" value="P-loop containing nucleoside triphosphate hydrolases"/>
    <property type="match status" value="2"/>
</dbReference>
<dbReference type="PROSITE" id="PS51192">
    <property type="entry name" value="HELICASE_ATP_BIND_1"/>
    <property type="match status" value="1"/>
</dbReference>
<dbReference type="PROSITE" id="PS51194">
    <property type="entry name" value="HELICASE_CTER"/>
    <property type="match status" value="1"/>
</dbReference>
<dbReference type="PROSITE" id="PS51195">
    <property type="entry name" value="Q_MOTIF"/>
    <property type="match status" value="1"/>
</dbReference>
<reference key="1">
    <citation type="journal article" date="2001" name="Genome Res.">
        <title>Towards a catalog of human genes and proteins: sequencing and analysis of 500 novel complete protein coding human cDNAs.</title>
        <authorList>
            <person name="Wiemann S."/>
            <person name="Weil B."/>
            <person name="Wellenreuther R."/>
            <person name="Gassenhuber J."/>
            <person name="Glassl S."/>
            <person name="Ansorge W."/>
            <person name="Boecher M."/>
            <person name="Bloecker H."/>
            <person name="Bauersachs S."/>
            <person name="Blum H."/>
            <person name="Lauber J."/>
            <person name="Duesterhoeft A."/>
            <person name="Beyer A."/>
            <person name="Koehrer K."/>
            <person name="Strack N."/>
            <person name="Mewes H.-W."/>
            <person name="Ottenwaelder B."/>
            <person name="Obermaier B."/>
            <person name="Tampe J."/>
            <person name="Heubner D."/>
            <person name="Wambutt R."/>
            <person name="Korn B."/>
            <person name="Klein M."/>
            <person name="Poustka A."/>
        </authorList>
    </citation>
    <scope>NUCLEOTIDE SEQUENCE [LARGE SCALE MRNA] (ISOFORM 2)</scope>
    <source>
        <tissue>Fetal brain</tissue>
    </source>
</reference>
<reference key="2">
    <citation type="journal article" date="2006" name="Nature">
        <title>The DNA sequence and biological annotation of human chromosome 1.</title>
        <authorList>
            <person name="Gregory S.G."/>
            <person name="Barlow K.F."/>
            <person name="McLay K.E."/>
            <person name="Kaul R."/>
            <person name="Swarbreck D."/>
            <person name="Dunham A."/>
            <person name="Scott C.E."/>
            <person name="Howe K.L."/>
            <person name="Woodfine K."/>
            <person name="Spencer C.C.A."/>
            <person name="Jones M.C."/>
            <person name="Gillson C."/>
            <person name="Searle S."/>
            <person name="Zhou Y."/>
            <person name="Kokocinski F."/>
            <person name="McDonald L."/>
            <person name="Evans R."/>
            <person name="Phillips K."/>
            <person name="Atkinson A."/>
            <person name="Cooper R."/>
            <person name="Jones C."/>
            <person name="Hall R.E."/>
            <person name="Andrews T.D."/>
            <person name="Lloyd C."/>
            <person name="Ainscough R."/>
            <person name="Almeida J.P."/>
            <person name="Ambrose K.D."/>
            <person name="Anderson F."/>
            <person name="Andrew R.W."/>
            <person name="Ashwell R.I.S."/>
            <person name="Aubin K."/>
            <person name="Babbage A.K."/>
            <person name="Bagguley C.L."/>
            <person name="Bailey J."/>
            <person name="Beasley H."/>
            <person name="Bethel G."/>
            <person name="Bird C.P."/>
            <person name="Bray-Allen S."/>
            <person name="Brown J.Y."/>
            <person name="Brown A.J."/>
            <person name="Buckley D."/>
            <person name="Burton J."/>
            <person name="Bye J."/>
            <person name="Carder C."/>
            <person name="Chapman J.C."/>
            <person name="Clark S.Y."/>
            <person name="Clarke G."/>
            <person name="Clee C."/>
            <person name="Cobley V."/>
            <person name="Collier R.E."/>
            <person name="Corby N."/>
            <person name="Coville G.J."/>
            <person name="Davies J."/>
            <person name="Deadman R."/>
            <person name="Dunn M."/>
            <person name="Earthrowl M."/>
            <person name="Ellington A.G."/>
            <person name="Errington H."/>
            <person name="Frankish A."/>
            <person name="Frankland J."/>
            <person name="French L."/>
            <person name="Garner P."/>
            <person name="Garnett J."/>
            <person name="Gay L."/>
            <person name="Ghori M.R.J."/>
            <person name="Gibson R."/>
            <person name="Gilby L.M."/>
            <person name="Gillett W."/>
            <person name="Glithero R.J."/>
            <person name="Grafham D.V."/>
            <person name="Griffiths C."/>
            <person name="Griffiths-Jones S."/>
            <person name="Grocock R."/>
            <person name="Hammond S."/>
            <person name="Harrison E.S.I."/>
            <person name="Hart E."/>
            <person name="Haugen E."/>
            <person name="Heath P.D."/>
            <person name="Holmes S."/>
            <person name="Holt K."/>
            <person name="Howden P.J."/>
            <person name="Hunt A.R."/>
            <person name="Hunt S.E."/>
            <person name="Hunter G."/>
            <person name="Isherwood J."/>
            <person name="James R."/>
            <person name="Johnson C."/>
            <person name="Johnson D."/>
            <person name="Joy A."/>
            <person name="Kay M."/>
            <person name="Kershaw J.K."/>
            <person name="Kibukawa M."/>
            <person name="Kimberley A.M."/>
            <person name="King A."/>
            <person name="Knights A.J."/>
            <person name="Lad H."/>
            <person name="Laird G."/>
            <person name="Lawlor S."/>
            <person name="Leongamornlert D.A."/>
            <person name="Lloyd D.M."/>
            <person name="Loveland J."/>
            <person name="Lovell J."/>
            <person name="Lush M.J."/>
            <person name="Lyne R."/>
            <person name="Martin S."/>
            <person name="Mashreghi-Mohammadi M."/>
            <person name="Matthews L."/>
            <person name="Matthews N.S.W."/>
            <person name="McLaren S."/>
            <person name="Milne S."/>
            <person name="Mistry S."/>
            <person name="Moore M.J.F."/>
            <person name="Nickerson T."/>
            <person name="O'Dell C.N."/>
            <person name="Oliver K."/>
            <person name="Palmeiri A."/>
            <person name="Palmer S.A."/>
            <person name="Parker A."/>
            <person name="Patel D."/>
            <person name="Pearce A.V."/>
            <person name="Peck A.I."/>
            <person name="Pelan S."/>
            <person name="Phelps K."/>
            <person name="Phillimore B.J."/>
            <person name="Plumb R."/>
            <person name="Rajan J."/>
            <person name="Raymond C."/>
            <person name="Rouse G."/>
            <person name="Saenphimmachak C."/>
            <person name="Sehra H.K."/>
            <person name="Sheridan E."/>
            <person name="Shownkeen R."/>
            <person name="Sims S."/>
            <person name="Skuce C.D."/>
            <person name="Smith M."/>
            <person name="Steward C."/>
            <person name="Subramanian S."/>
            <person name="Sycamore N."/>
            <person name="Tracey A."/>
            <person name="Tromans A."/>
            <person name="Van Helmond Z."/>
            <person name="Wall M."/>
            <person name="Wallis J.M."/>
            <person name="White S."/>
            <person name="Whitehead S.L."/>
            <person name="Wilkinson J.E."/>
            <person name="Willey D.L."/>
            <person name="Williams H."/>
            <person name="Wilming L."/>
            <person name="Wray P.W."/>
            <person name="Wu Z."/>
            <person name="Coulson A."/>
            <person name="Vaudin M."/>
            <person name="Sulston J.E."/>
            <person name="Durbin R.M."/>
            <person name="Hubbard T."/>
            <person name="Wooster R."/>
            <person name="Dunham I."/>
            <person name="Carter N.P."/>
            <person name="McVean G."/>
            <person name="Ross M.T."/>
            <person name="Harrow J."/>
            <person name="Olson M.V."/>
            <person name="Beck S."/>
            <person name="Rogers J."/>
            <person name="Bentley D.R."/>
        </authorList>
    </citation>
    <scope>NUCLEOTIDE SEQUENCE [LARGE SCALE GENOMIC DNA]</scope>
</reference>
<reference key="3">
    <citation type="journal article" date="2004" name="Genome Res.">
        <title>The status, quality, and expansion of the NIH full-length cDNA project: the Mammalian Gene Collection (MGC).</title>
        <authorList>
            <consortium name="The MGC Project Team"/>
        </authorList>
    </citation>
    <scope>NUCLEOTIDE SEQUENCE [LARGE SCALE MRNA] (ISOFORM 1)</scope>
    <scope>VARIANT ARG-472</scope>
    <source>
        <tissue>Brain</tissue>
        <tissue>Lung</tissue>
    </source>
</reference>
<reference key="4">
    <citation type="journal article" date="2008" name="Proc. Natl. Acad. Sci. U.S.A.">
        <title>A quantitative atlas of mitotic phosphorylation.</title>
        <authorList>
            <person name="Dephoure N."/>
            <person name="Zhou C."/>
            <person name="Villen J."/>
            <person name="Beausoleil S.A."/>
            <person name="Bakalarski C.E."/>
            <person name="Elledge S.J."/>
            <person name="Gygi S.P."/>
        </authorList>
    </citation>
    <scope>PHOSPHORYLATION [LARGE SCALE ANALYSIS] AT SER-64</scope>
    <scope>IDENTIFICATION BY MASS SPECTROMETRY [LARGE SCALE ANALYSIS]</scope>
    <source>
        <tissue>Cervix carcinoma</tissue>
    </source>
</reference>
<reference key="5">
    <citation type="journal article" date="2009" name="Sci. Signal.">
        <title>Quantitative phosphoproteomic analysis of T cell receptor signaling reveals system-wide modulation of protein-protein interactions.</title>
        <authorList>
            <person name="Mayya V."/>
            <person name="Lundgren D.H."/>
            <person name="Hwang S.-I."/>
            <person name="Rezaul K."/>
            <person name="Wu L."/>
            <person name="Eng J.K."/>
            <person name="Rodionov V."/>
            <person name="Han D.K."/>
        </authorList>
    </citation>
    <scope>PHOSPHORYLATION [LARGE SCALE ANALYSIS] AT SER-160</scope>
    <scope>IDENTIFICATION BY MASS SPECTROMETRY [LARGE SCALE ANALYSIS]</scope>
    <source>
        <tissue>Leukemic T-cell</tissue>
    </source>
</reference>
<reference key="6">
    <citation type="journal article" date="2010" name="Sci. Signal.">
        <title>Quantitative phosphoproteomics reveals widespread full phosphorylation site occupancy during mitosis.</title>
        <authorList>
            <person name="Olsen J.V."/>
            <person name="Vermeulen M."/>
            <person name="Santamaria A."/>
            <person name="Kumar C."/>
            <person name="Miller M.L."/>
            <person name="Jensen L.J."/>
            <person name="Gnad F."/>
            <person name="Cox J."/>
            <person name="Jensen T.S."/>
            <person name="Nigg E.A."/>
            <person name="Brunak S."/>
            <person name="Mann M."/>
        </authorList>
    </citation>
    <scope>IDENTIFICATION BY MASS SPECTROMETRY [LARGE SCALE ANALYSIS]</scope>
    <source>
        <tissue>Cervix carcinoma</tissue>
    </source>
</reference>
<reference key="7">
    <citation type="journal article" date="2011" name="BMC Syst. Biol.">
        <title>Initial characterization of the human central proteome.</title>
        <authorList>
            <person name="Burkard T.R."/>
            <person name="Planyavsky M."/>
            <person name="Kaupe I."/>
            <person name="Breitwieser F.P."/>
            <person name="Buerckstuemmer T."/>
            <person name="Bennett K.L."/>
            <person name="Superti-Furga G."/>
            <person name="Colinge J."/>
        </authorList>
    </citation>
    <scope>IDENTIFICATION BY MASS SPECTROMETRY [LARGE SCALE ANALYSIS]</scope>
</reference>
<reference key="8">
    <citation type="journal article" date="2013" name="J. Proteome Res.">
        <title>Toward a comprehensive characterization of a human cancer cell phosphoproteome.</title>
        <authorList>
            <person name="Zhou H."/>
            <person name="Di Palma S."/>
            <person name="Preisinger C."/>
            <person name="Peng M."/>
            <person name="Polat A.N."/>
            <person name="Heck A.J."/>
            <person name="Mohammed S."/>
        </authorList>
    </citation>
    <scope>PHOSPHORYLATION [LARGE SCALE ANALYSIS] AT SER-76; SER-156 AND SER-160</scope>
    <scope>IDENTIFICATION BY MASS SPECTROMETRY [LARGE SCALE ANALYSIS]</scope>
    <source>
        <tissue>Cervix carcinoma</tissue>
        <tissue>Erythroleukemia</tissue>
    </source>
</reference>
<reference key="9">
    <citation type="journal article" date="2017" name="Nat. Commun.">
        <title>R2TP/Prefoldin-like component RUVBL1/RUVBL2 directly interacts with ZNHIT2 to regulate assembly of U5 small nuclear ribonucleoprotein.</title>
        <authorList>
            <person name="Cloutier P."/>
            <person name="Poitras C."/>
            <person name="Durand M."/>
            <person name="Hekmat O."/>
            <person name="Fiola-Masson E."/>
            <person name="Bouchard A."/>
            <person name="Faubert D."/>
            <person name="Chabot B."/>
            <person name="Coulombe B."/>
        </authorList>
    </citation>
    <scope>INTERACTION WITH RUVBL1/RUVBL2 COMPLEX</scope>
</reference>
<reference key="10">
    <citation type="journal article" date="2017" name="Nat. Struct. Mol. Biol.">
        <title>Site-specific mapping of the human SUMO proteome reveals co-modification with phosphorylation.</title>
        <authorList>
            <person name="Hendriks I.A."/>
            <person name="Lyon D."/>
            <person name="Young C."/>
            <person name="Jensen L.J."/>
            <person name="Vertegaal A.C."/>
            <person name="Nielsen M.L."/>
        </authorList>
    </citation>
    <scope>SUMOYLATION [LARGE SCALE ANALYSIS] AT LYS-26</scope>
    <scope>IDENTIFICATION BY MASS SPECTROMETRY [LARGE SCALE ANALYSIS]</scope>
</reference>
<reference key="11">
    <citation type="submission" date="2009-02" db="PDB data bank">
        <title>Solution structure of the ZF-hit domain in DEAD (Asp-Glu-Ala-Asp) box polypeptide 59.</title>
        <authorList>
            <consortium name="RIKEN structural genomics initiative (RSGI)"/>
        </authorList>
    </citation>
    <scope>STRUCTURE BY NMR OF 94-146</scope>
</reference>
<reference key="12">
    <citation type="journal article" date="2006" name="Science">
        <title>The consensus coding sequences of human breast and colorectal cancers.</title>
        <authorList>
            <person name="Sjoeblom T."/>
            <person name="Jones S."/>
            <person name="Wood L.D."/>
            <person name="Parsons D.W."/>
            <person name="Lin J."/>
            <person name="Barber T.D."/>
            <person name="Mandelker D."/>
            <person name="Leary R.J."/>
            <person name="Ptak J."/>
            <person name="Silliman N."/>
            <person name="Szabo S."/>
            <person name="Buckhaults P."/>
            <person name="Farrell C."/>
            <person name="Meeh P."/>
            <person name="Markowitz S.D."/>
            <person name="Willis J."/>
            <person name="Dawson D."/>
            <person name="Willson J.K.V."/>
            <person name="Gazdar A.F."/>
            <person name="Hartigan J."/>
            <person name="Wu L."/>
            <person name="Liu C."/>
            <person name="Parmigiani G."/>
            <person name="Park B.H."/>
            <person name="Bachman K.E."/>
            <person name="Papadopoulos N."/>
            <person name="Vogelstein B."/>
            <person name="Kinzler K.W."/>
            <person name="Velculescu V.E."/>
        </authorList>
    </citation>
    <scope>VARIANT [LARGE SCALE ANALYSIS] THR-77</scope>
</reference>
<reference key="13">
    <citation type="journal article" date="2013" name="Am. J. Hum. Genet.">
        <title>Mutations in DDX59 implicate RNA helicase in the pathogenesis of orofaciodigital syndrome.</title>
        <authorList>
            <person name="Shamseldin H.E."/>
            <person name="Rajab A."/>
            <person name="Alhashem A."/>
            <person name="Shaheen R."/>
            <person name="Al-Shidi T."/>
            <person name="Alamro R."/>
            <person name="Al Harassi S."/>
            <person name="Alkuraya F.S."/>
        </authorList>
    </citation>
    <scope>VARIANTS OFD5 GLY-367 AND ARG-534</scope>
    <scope>CHARACTERIZATION OF VARIANT OFD5 GLY-367</scope>
    <scope>SUBCELLULAR LOCATION</scope>
    <scope>TISSUE SPECIFICITY</scope>
</reference>
<evidence type="ECO:0000255" key="1">
    <source>
        <dbReference type="PROSITE-ProRule" id="PRU00541"/>
    </source>
</evidence>
<evidence type="ECO:0000255" key="2">
    <source>
        <dbReference type="PROSITE-ProRule" id="PRU00542"/>
    </source>
</evidence>
<evidence type="ECO:0000256" key="3">
    <source>
        <dbReference type="SAM" id="MobiDB-lite"/>
    </source>
</evidence>
<evidence type="ECO:0000269" key="4">
    <source>
    </source>
</evidence>
<evidence type="ECO:0000269" key="5">
    <source>
    </source>
</evidence>
<evidence type="ECO:0000269" key="6">
    <source>
    </source>
</evidence>
<evidence type="ECO:0000269" key="7">
    <source>
    </source>
</evidence>
<evidence type="ECO:0000303" key="8">
    <source>
    </source>
</evidence>
<evidence type="ECO:0000303" key="9">
    <source>
    </source>
</evidence>
<evidence type="ECO:0000305" key="10"/>
<evidence type="ECO:0007744" key="11">
    <source>
    </source>
</evidence>
<evidence type="ECO:0007744" key="12">
    <source>
    </source>
</evidence>
<evidence type="ECO:0007744" key="13">
    <source>
    </source>
</evidence>
<evidence type="ECO:0007744" key="14">
    <source>
    </source>
</evidence>
<evidence type="ECO:0007829" key="15">
    <source>
        <dbReference type="PDB" id="2YQP"/>
    </source>
</evidence>
<comment type="catalytic activity">
    <reaction>
        <text>ATP + H2O = ADP + phosphate + H(+)</text>
        <dbReference type="Rhea" id="RHEA:13065"/>
        <dbReference type="ChEBI" id="CHEBI:15377"/>
        <dbReference type="ChEBI" id="CHEBI:15378"/>
        <dbReference type="ChEBI" id="CHEBI:30616"/>
        <dbReference type="ChEBI" id="CHEBI:43474"/>
        <dbReference type="ChEBI" id="CHEBI:456216"/>
        <dbReference type="EC" id="3.6.4.13"/>
    </reaction>
</comment>
<comment type="subunit">
    <text evidence="7">Interacts (via HIT-type zinc finger) with the RUVBL1/RUVBL2 complex in the presence of ADP.</text>
</comment>
<comment type="subcellular location">
    <subcellularLocation>
        <location evidence="6">Cytoplasm</location>
    </subcellularLocation>
    <subcellularLocation>
        <location evidence="6">Nucleus</location>
    </subcellularLocation>
    <text>Exhibits granular localization in the nucleus, as well as in the cytoplasm.</text>
</comment>
<comment type="alternative products">
    <event type="alternative splicing"/>
    <isoform>
        <id>Q5T1V6-1</id>
        <name>1</name>
        <sequence type="displayed"/>
    </isoform>
    <isoform>
        <id>Q5T1V6-2</id>
        <name>2</name>
        <sequence type="described" ref="VSP_024227"/>
    </isoform>
</comment>
<comment type="tissue specificity">
    <text evidence="6">Expressed in fibroblasts (at protein level).</text>
</comment>
<comment type="domain">
    <text>The Q motif is unique to and characteristic of the DEAD box family of RNA helicases and controls ATP binding and hydrolysis.</text>
</comment>
<comment type="disease" evidence="6">
    <disease id="DI-03935">
        <name>Orofaciodigital syndrome 5</name>
        <acronym>OFD5</acronym>
        <description>A form of orofaciodigital syndrome, a group of heterogeneous disorders characterized by malformations of the oral cavity, face and digits, and associated phenotypic abnormalities that lead to the delineation of various subtypes. OFD5 patients show the core features of cleft palate, lobulated tongue, and polydactyly. Additional features include frontal bossing and intellectual disability.</description>
        <dbReference type="MIM" id="174300"/>
    </disease>
    <text>The disease is caused by variants affecting the gene represented in this entry.</text>
</comment>
<comment type="similarity">
    <text evidence="10">Belongs to the DEAD box helicase family. DDX59 subfamily.</text>
</comment>
<comment type="sequence caution" evidence="10">
    <conflict type="miscellaneous discrepancy">
        <sequence resource="EMBL-CDS" id="AAH14183"/>
    </conflict>
    <text>Contaminating sequence. Potential poly-A sequence starting in position 433.</text>
</comment>
<gene>
    <name type="primary">DDX59</name>
    <name evidence="9" type="synonym">ZNHIT5</name>
</gene>